<name>PDE11_DROME</name>
<proteinExistence type="evidence at protein level"/>
<feature type="chain" id="PRO_0000247044" description="Dual 3',5'-cyclic-AMP and -GMP phosphodiesterase 11">
    <location>
        <begin position="1"/>
        <end position="1451"/>
    </location>
</feature>
<feature type="domain" description="GAF 1">
    <location>
        <begin position="419"/>
        <end position="572"/>
    </location>
</feature>
<feature type="domain" description="GAF 2">
    <location>
        <begin position="604"/>
        <end position="754"/>
    </location>
</feature>
<feature type="domain" description="PDEase" evidence="2">
    <location>
        <begin position="783"/>
        <end position="1107"/>
    </location>
</feature>
<feature type="region of interest" description="Disordered" evidence="3">
    <location>
        <begin position="1"/>
        <end position="54"/>
    </location>
</feature>
<feature type="region of interest" description="Disordered" evidence="3">
    <location>
        <begin position="75"/>
        <end position="100"/>
    </location>
</feature>
<feature type="region of interest" description="Disordered" evidence="3">
    <location>
        <begin position="125"/>
        <end position="169"/>
    </location>
</feature>
<feature type="region of interest" description="Disordered" evidence="3">
    <location>
        <begin position="235"/>
        <end position="262"/>
    </location>
</feature>
<feature type="region of interest" description="Disordered" evidence="3">
    <location>
        <begin position="327"/>
        <end position="374"/>
    </location>
</feature>
<feature type="region of interest" description="Disordered" evidence="3">
    <location>
        <begin position="1109"/>
        <end position="1171"/>
    </location>
</feature>
<feature type="region of interest" description="Disordered" evidence="3">
    <location>
        <begin position="1200"/>
        <end position="1248"/>
    </location>
</feature>
<feature type="region of interest" description="Disordered" evidence="3">
    <location>
        <begin position="1268"/>
        <end position="1305"/>
    </location>
</feature>
<feature type="region of interest" description="Disordered" evidence="3">
    <location>
        <begin position="1325"/>
        <end position="1364"/>
    </location>
</feature>
<feature type="compositionally biased region" description="Basic residues" evidence="3">
    <location>
        <begin position="11"/>
        <end position="21"/>
    </location>
</feature>
<feature type="compositionally biased region" description="Low complexity" evidence="3">
    <location>
        <begin position="24"/>
        <end position="45"/>
    </location>
</feature>
<feature type="compositionally biased region" description="Polar residues" evidence="3">
    <location>
        <begin position="77"/>
        <end position="91"/>
    </location>
</feature>
<feature type="compositionally biased region" description="Low complexity" evidence="3">
    <location>
        <begin position="135"/>
        <end position="147"/>
    </location>
</feature>
<feature type="compositionally biased region" description="Low complexity" evidence="3">
    <location>
        <begin position="160"/>
        <end position="169"/>
    </location>
</feature>
<feature type="compositionally biased region" description="Polar residues" evidence="3">
    <location>
        <begin position="235"/>
        <end position="248"/>
    </location>
</feature>
<feature type="compositionally biased region" description="Basic residues" evidence="3">
    <location>
        <begin position="327"/>
        <end position="340"/>
    </location>
</feature>
<feature type="compositionally biased region" description="Low complexity" evidence="3">
    <location>
        <begin position="341"/>
        <end position="355"/>
    </location>
</feature>
<feature type="compositionally biased region" description="Gly residues" evidence="3">
    <location>
        <begin position="356"/>
        <end position="374"/>
    </location>
</feature>
<feature type="compositionally biased region" description="Low complexity" evidence="3">
    <location>
        <begin position="1142"/>
        <end position="1171"/>
    </location>
</feature>
<feature type="compositionally biased region" description="Low complexity" evidence="3">
    <location>
        <begin position="1218"/>
        <end position="1234"/>
    </location>
</feature>
<feature type="compositionally biased region" description="Polar residues" evidence="3">
    <location>
        <begin position="1268"/>
        <end position="1277"/>
    </location>
</feature>
<feature type="compositionally biased region" description="Basic residues" evidence="3">
    <location>
        <begin position="1328"/>
        <end position="1355"/>
    </location>
</feature>
<feature type="active site" description="Proton donor" evidence="1">
    <location>
        <position position="860"/>
    </location>
</feature>
<feature type="binding site" evidence="2">
    <location>
        <position position="864"/>
    </location>
    <ligand>
        <name>a divalent metal cation</name>
        <dbReference type="ChEBI" id="CHEBI:60240"/>
        <label>1</label>
    </ligand>
</feature>
<feature type="binding site" evidence="2">
    <location>
        <position position="900"/>
    </location>
    <ligand>
        <name>a divalent metal cation</name>
        <dbReference type="ChEBI" id="CHEBI:60240"/>
        <label>1</label>
    </ligand>
</feature>
<feature type="binding site" evidence="2">
    <location>
        <position position="901"/>
    </location>
    <ligand>
        <name>a divalent metal cation</name>
        <dbReference type="ChEBI" id="CHEBI:60240"/>
        <label>1</label>
    </ligand>
</feature>
<feature type="binding site" evidence="2">
    <location>
        <position position="901"/>
    </location>
    <ligand>
        <name>a divalent metal cation</name>
        <dbReference type="ChEBI" id="CHEBI:60240"/>
        <label>2</label>
    </ligand>
</feature>
<feature type="binding site" evidence="2">
    <location>
        <position position="1011"/>
    </location>
    <ligand>
        <name>a divalent metal cation</name>
        <dbReference type="ChEBI" id="CHEBI:60240"/>
        <label>1</label>
    </ligand>
</feature>
<feature type="splice variant" id="VSP_030328" description="In isoform C." evidence="7">
    <location>
        <begin position="1"/>
        <end position="44"/>
    </location>
</feature>
<feature type="splice variant" id="VSP_019906" description="In isoform D." evidence="5">
    <original>M</original>
    <variation>MKVTQSEENTRNTSDRSKSVQTNRKFDNFNWLLSCGLLAAVKSTKLIPQLPRQQQPKKYNLRYAAELLKFDKIQFIKTEGLTFALLAGP</variation>
    <location>
        <position position="1"/>
    </location>
</feature>
<feature type="splice variant" id="VSP_030329" description="In isoform C." evidence="7">
    <original>QTPSHSPQIQHHSEIIPATT</original>
    <variation>MASSPNNAAPPVLWRARRKI</variation>
    <location>
        <begin position="45"/>
        <end position="64"/>
    </location>
</feature>
<feature type="sequence conflict" description="In Ref. 3; AAM52774." evidence="7" ref="3">
    <original>Q</original>
    <variation>QQQ</variation>
    <location>
        <position position="38"/>
    </location>
</feature>
<feature type="sequence conflict" description="In Ref. 3; AAM52774." evidence="7" ref="3">
    <original>V</original>
    <variation>A</variation>
    <location>
        <position position="1192"/>
    </location>
</feature>
<feature type="sequence conflict" description="In Ref. 3; AAM52774." evidence="7" ref="3">
    <original>A</original>
    <variation>V</variation>
    <location>
        <position position="1196"/>
    </location>
</feature>
<feature type="sequence conflict" description="In Ref. 3; AAM52774." evidence="7" ref="3">
    <original>C</original>
    <variation>R</variation>
    <location>
        <position position="1232"/>
    </location>
</feature>
<feature type="sequence conflict" description="In Ref. 3; AAM52774." evidence="7" ref="3">
    <original>H</original>
    <variation>HNH</variation>
    <location>
        <position position="1342"/>
    </location>
</feature>
<reference key="1">
    <citation type="journal article" date="2000" name="Science">
        <title>The genome sequence of Drosophila melanogaster.</title>
        <authorList>
            <person name="Adams M.D."/>
            <person name="Celniker S.E."/>
            <person name="Holt R.A."/>
            <person name="Evans C.A."/>
            <person name="Gocayne J.D."/>
            <person name="Amanatides P.G."/>
            <person name="Scherer S.E."/>
            <person name="Li P.W."/>
            <person name="Hoskins R.A."/>
            <person name="Galle R.F."/>
            <person name="George R.A."/>
            <person name="Lewis S.E."/>
            <person name="Richards S."/>
            <person name="Ashburner M."/>
            <person name="Henderson S.N."/>
            <person name="Sutton G.G."/>
            <person name="Wortman J.R."/>
            <person name="Yandell M.D."/>
            <person name="Zhang Q."/>
            <person name="Chen L.X."/>
            <person name="Brandon R.C."/>
            <person name="Rogers Y.-H.C."/>
            <person name="Blazej R.G."/>
            <person name="Champe M."/>
            <person name="Pfeiffer B.D."/>
            <person name="Wan K.H."/>
            <person name="Doyle C."/>
            <person name="Baxter E.G."/>
            <person name="Helt G."/>
            <person name="Nelson C.R."/>
            <person name="Miklos G.L.G."/>
            <person name="Abril J.F."/>
            <person name="Agbayani A."/>
            <person name="An H.-J."/>
            <person name="Andrews-Pfannkoch C."/>
            <person name="Baldwin D."/>
            <person name="Ballew R.M."/>
            <person name="Basu A."/>
            <person name="Baxendale J."/>
            <person name="Bayraktaroglu L."/>
            <person name="Beasley E.M."/>
            <person name="Beeson K.Y."/>
            <person name="Benos P.V."/>
            <person name="Berman B.P."/>
            <person name="Bhandari D."/>
            <person name="Bolshakov S."/>
            <person name="Borkova D."/>
            <person name="Botchan M.R."/>
            <person name="Bouck J."/>
            <person name="Brokstein P."/>
            <person name="Brottier P."/>
            <person name="Burtis K.C."/>
            <person name="Busam D.A."/>
            <person name="Butler H."/>
            <person name="Cadieu E."/>
            <person name="Center A."/>
            <person name="Chandra I."/>
            <person name="Cherry J.M."/>
            <person name="Cawley S."/>
            <person name="Dahlke C."/>
            <person name="Davenport L.B."/>
            <person name="Davies P."/>
            <person name="de Pablos B."/>
            <person name="Delcher A."/>
            <person name="Deng Z."/>
            <person name="Mays A.D."/>
            <person name="Dew I."/>
            <person name="Dietz S.M."/>
            <person name="Dodson K."/>
            <person name="Doup L.E."/>
            <person name="Downes M."/>
            <person name="Dugan-Rocha S."/>
            <person name="Dunkov B.C."/>
            <person name="Dunn P."/>
            <person name="Durbin K.J."/>
            <person name="Evangelista C.C."/>
            <person name="Ferraz C."/>
            <person name="Ferriera S."/>
            <person name="Fleischmann W."/>
            <person name="Fosler C."/>
            <person name="Gabrielian A.E."/>
            <person name="Garg N.S."/>
            <person name="Gelbart W.M."/>
            <person name="Glasser K."/>
            <person name="Glodek A."/>
            <person name="Gong F."/>
            <person name="Gorrell J.H."/>
            <person name="Gu Z."/>
            <person name="Guan P."/>
            <person name="Harris M."/>
            <person name="Harris N.L."/>
            <person name="Harvey D.A."/>
            <person name="Heiman T.J."/>
            <person name="Hernandez J.R."/>
            <person name="Houck J."/>
            <person name="Hostin D."/>
            <person name="Houston K.A."/>
            <person name="Howland T.J."/>
            <person name="Wei M.-H."/>
            <person name="Ibegwam C."/>
            <person name="Jalali M."/>
            <person name="Kalush F."/>
            <person name="Karpen G.H."/>
            <person name="Ke Z."/>
            <person name="Kennison J.A."/>
            <person name="Ketchum K.A."/>
            <person name="Kimmel B.E."/>
            <person name="Kodira C.D."/>
            <person name="Kraft C.L."/>
            <person name="Kravitz S."/>
            <person name="Kulp D."/>
            <person name="Lai Z."/>
            <person name="Lasko P."/>
            <person name="Lei Y."/>
            <person name="Levitsky A.A."/>
            <person name="Li J.H."/>
            <person name="Li Z."/>
            <person name="Liang Y."/>
            <person name="Lin X."/>
            <person name="Liu X."/>
            <person name="Mattei B."/>
            <person name="McIntosh T.C."/>
            <person name="McLeod M.P."/>
            <person name="McPherson D."/>
            <person name="Merkulov G."/>
            <person name="Milshina N.V."/>
            <person name="Mobarry C."/>
            <person name="Morris J."/>
            <person name="Moshrefi A."/>
            <person name="Mount S.M."/>
            <person name="Moy M."/>
            <person name="Murphy B."/>
            <person name="Murphy L."/>
            <person name="Muzny D.M."/>
            <person name="Nelson D.L."/>
            <person name="Nelson D.R."/>
            <person name="Nelson K.A."/>
            <person name="Nixon K."/>
            <person name="Nusskern D.R."/>
            <person name="Pacleb J.M."/>
            <person name="Palazzolo M."/>
            <person name="Pittman G.S."/>
            <person name="Pan S."/>
            <person name="Pollard J."/>
            <person name="Puri V."/>
            <person name="Reese M.G."/>
            <person name="Reinert K."/>
            <person name="Remington K."/>
            <person name="Saunders R.D.C."/>
            <person name="Scheeler F."/>
            <person name="Shen H."/>
            <person name="Shue B.C."/>
            <person name="Siden-Kiamos I."/>
            <person name="Simpson M."/>
            <person name="Skupski M.P."/>
            <person name="Smith T.J."/>
            <person name="Spier E."/>
            <person name="Spradling A.C."/>
            <person name="Stapleton M."/>
            <person name="Strong R."/>
            <person name="Sun E."/>
            <person name="Svirskas R."/>
            <person name="Tector C."/>
            <person name="Turner R."/>
            <person name="Venter E."/>
            <person name="Wang A.H."/>
            <person name="Wang X."/>
            <person name="Wang Z.-Y."/>
            <person name="Wassarman D.A."/>
            <person name="Weinstock G.M."/>
            <person name="Weissenbach J."/>
            <person name="Williams S.M."/>
            <person name="Woodage T."/>
            <person name="Worley K.C."/>
            <person name="Wu D."/>
            <person name="Yang S."/>
            <person name="Yao Q.A."/>
            <person name="Ye J."/>
            <person name="Yeh R.-F."/>
            <person name="Zaveri J.S."/>
            <person name="Zhan M."/>
            <person name="Zhang G."/>
            <person name="Zhao Q."/>
            <person name="Zheng L."/>
            <person name="Zheng X.H."/>
            <person name="Zhong F.N."/>
            <person name="Zhong W."/>
            <person name="Zhou X."/>
            <person name="Zhu S.C."/>
            <person name="Zhu X."/>
            <person name="Smith H.O."/>
            <person name="Gibbs R.A."/>
            <person name="Myers E.W."/>
            <person name="Rubin G.M."/>
            <person name="Venter J.C."/>
        </authorList>
    </citation>
    <scope>NUCLEOTIDE SEQUENCE [LARGE SCALE GENOMIC DNA]</scope>
    <source>
        <strain>Berkeley</strain>
    </source>
</reference>
<reference key="2">
    <citation type="journal article" date="2002" name="Genome Biol.">
        <title>Annotation of the Drosophila melanogaster euchromatic genome: a systematic review.</title>
        <authorList>
            <person name="Misra S."/>
            <person name="Crosby M.A."/>
            <person name="Mungall C.J."/>
            <person name="Matthews B.B."/>
            <person name="Campbell K.S."/>
            <person name="Hradecky P."/>
            <person name="Huang Y."/>
            <person name="Kaminker J.S."/>
            <person name="Millburn G.H."/>
            <person name="Prochnik S.E."/>
            <person name="Smith C.D."/>
            <person name="Tupy J.L."/>
            <person name="Whitfield E.J."/>
            <person name="Bayraktaroglu L."/>
            <person name="Berman B.P."/>
            <person name="Bettencourt B.R."/>
            <person name="Celniker S.E."/>
            <person name="de Grey A.D.N.J."/>
            <person name="Drysdale R.A."/>
            <person name="Harris N.L."/>
            <person name="Richter J."/>
            <person name="Russo S."/>
            <person name="Schroeder A.J."/>
            <person name="Shu S.Q."/>
            <person name="Stapleton M."/>
            <person name="Yamada C."/>
            <person name="Ashburner M."/>
            <person name="Gelbart W.M."/>
            <person name="Rubin G.M."/>
            <person name="Lewis S.E."/>
        </authorList>
    </citation>
    <scope>GENOME REANNOTATION</scope>
    <scope>ALTERNATIVE SPLICING</scope>
    <source>
        <strain>Berkeley</strain>
    </source>
</reference>
<reference key="3">
    <citation type="journal article" date="2002" name="Genome Biol.">
        <title>A Drosophila full-length cDNA resource.</title>
        <authorList>
            <person name="Stapleton M."/>
            <person name="Carlson J.W."/>
            <person name="Brokstein P."/>
            <person name="Yu C."/>
            <person name="Champe M."/>
            <person name="George R.A."/>
            <person name="Guarin H."/>
            <person name="Kronmiller B."/>
            <person name="Pacleb J.M."/>
            <person name="Park S."/>
            <person name="Wan K.H."/>
            <person name="Rubin G.M."/>
            <person name="Celniker S.E."/>
        </authorList>
    </citation>
    <scope>NUCLEOTIDE SEQUENCE [LARGE SCALE MRNA] (ISOFORM D)</scope>
    <source>
        <strain>Berkeley</strain>
        <tissue>Embryo</tissue>
    </source>
</reference>
<reference key="4">
    <citation type="journal article" date="2005" name="Biochem. J.">
        <title>Cyclic nucleotide phosphodiesterases in Drosophila melanogaster.</title>
        <authorList>
            <person name="Day J.P."/>
            <person name="Dow J.A.T."/>
            <person name="Houslay M.D."/>
            <person name="Davies S.A."/>
        </authorList>
    </citation>
    <scope>FUNCTION</scope>
    <scope>CATALYTIC ACTIVITY</scope>
    <scope>BIOPHYSICOCHEMICAL PROPERTIES</scope>
    <scope>TISSUE SPECIFICITY</scope>
</reference>
<gene>
    <name type="primary">Pde11</name>
    <name type="ORF">CG34341</name>
</gene>
<organism>
    <name type="scientific">Drosophila melanogaster</name>
    <name type="common">Fruit fly</name>
    <dbReference type="NCBI Taxonomy" id="7227"/>
    <lineage>
        <taxon>Eukaryota</taxon>
        <taxon>Metazoa</taxon>
        <taxon>Ecdysozoa</taxon>
        <taxon>Arthropoda</taxon>
        <taxon>Hexapoda</taxon>
        <taxon>Insecta</taxon>
        <taxon>Pterygota</taxon>
        <taxon>Neoptera</taxon>
        <taxon>Endopterygota</taxon>
        <taxon>Diptera</taxon>
        <taxon>Brachycera</taxon>
        <taxon>Muscomorpha</taxon>
        <taxon>Ephydroidea</taxon>
        <taxon>Drosophilidae</taxon>
        <taxon>Drosophila</taxon>
        <taxon>Sophophora</taxon>
    </lineage>
</organism>
<dbReference type="EC" id="3.1.4.35" evidence="4"/>
<dbReference type="EC" id="3.1.4.53" evidence="4"/>
<dbReference type="EMBL" id="AE014134">
    <property type="protein sequence ID" value="AAF53675.3"/>
    <property type="molecule type" value="Genomic_DNA"/>
</dbReference>
<dbReference type="EMBL" id="AE014134">
    <property type="protein sequence ID" value="AAF53676.2"/>
    <property type="molecule type" value="Genomic_DNA"/>
</dbReference>
<dbReference type="EMBL" id="AY122262">
    <property type="protein sequence ID" value="AAM52774.1"/>
    <property type="molecule type" value="mRNA"/>
</dbReference>
<dbReference type="RefSeq" id="NP_001097177.1">
    <molecule id="Q9VJ79-3"/>
    <property type="nucleotide sequence ID" value="NM_001103707.2"/>
</dbReference>
<dbReference type="RefSeq" id="NP_001286044.1">
    <molecule id="Q9VJ79-1"/>
    <property type="nucleotide sequence ID" value="NM_001299115.1"/>
</dbReference>
<dbReference type="RefSeq" id="NP_001286045.1">
    <molecule id="Q9VJ79-3"/>
    <property type="nucleotide sequence ID" value="NM_001299116.1"/>
</dbReference>
<dbReference type="RefSeq" id="NP_609885.2">
    <molecule id="Q9VJ79-1"/>
    <property type="nucleotide sequence ID" value="NM_136041.2"/>
</dbReference>
<dbReference type="SMR" id="Q9VJ79"/>
<dbReference type="BioGRID" id="61102">
    <property type="interactions" value="7"/>
</dbReference>
<dbReference type="FunCoup" id="Q9VJ79">
    <property type="interactions" value="394"/>
</dbReference>
<dbReference type="STRING" id="7227.FBpp0310380"/>
<dbReference type="PaxDb" id="7227-FBpp0111456"/>
<dbReference type="EnsemblMetazoa" id="FBtr0112544">
    <molecule id="Q9VJ79-1"/>
    <property type="protein sequence ID" value="FBpp0111456"/>
    <property type="gene ID" value="FBgn0085370"/>
</dbReference>
<dbReference type="EnsemblMetazoa" id="FBtr0112545">
    <molecule id="Q9VJ79-3"/>
    <property type="protein sequence ID" value="FBpp0111457"/>
    <property type="gene ID" value="FBgn0085370"/>
</dbReference>
<dbReference type="EnsemblMetazoa" id="FBtr0343830">
    <molecule id="Q9VJ79-1"/>
    <property type="protein sequence ID" value="FBpp0310380"/>
    <property type="gene ID" value="FBgn0085370"/>
</dbReference>
<dbReference type="EnsemblMetazoa" id="FBtr0343831">
    <molecule id="Q9VJ79-3"/>
    <property type="protein sequence ID" value="FBpp0310381"/>
    <property type="gene ID" value="FBgn0085370"/>
</dbReference>
<dbReference type="GeneID" id="35107"/>
<dbReference type="KEGG" id="dme:Dmel_CG34341"/>
<dbReference type="AGR" id="FB:FBgn0085370"/>
<dbReference type="CTD" id="35107"/>
<dbReference type="FlyBase" id="FBgn0085370">
    <property type="gene designation" value="Pde11"/>
</dbReference>
<dbReference type="VEuPathDB" id="VectorBase:FBgn0085370"/>
<dbReference type="eggNOG" id="KOG3689">
    <property type="taxonomic scope" value="Eukaryota"/>
</dbReference>
<dbReference type="InParanoid" id="Q9VJ79"/>
<dbReference type="OMA" id="GHQYQYY"/>
<dbReference type="OrthoDB" id="74705at2759"/>
<dbReference type="PhylomeDB" id="Q9VJ79"/>
<dbReference type="Reactome" id="R-DME-418457">
    <property type="pathway name" value="cGMP effects"/>
</dbReference>
<dbReference type="Reactome" id="R-DME-445355">
    <property type="pathway name" value="Smooth Muscle Contraction"/>
</dbReference>
<dbReference type="Reactome" id="R-DME-9013422">
    <property type="pathway name" value="RHOBTB1 GTPase cycle"/>
</dbReference>
<dbReference type="BioGRID-ORCS" id="35107">
    <property type="hits" value="0 hits in 3 CRISPR screens"/>
</dbReference>
<dbReference type="GenomeRNAi" id="35107"/>
<dbReference type="PRO" id="PR:Q9VJ79"/>
<dbReference type="Proteomes" id="UP000000803">
    <property type="component" value="Chromosome 2L"/>
</dbReference>
<dbReference type="Bgee" id="FBgn0085370">
    <property type="expression patterns" value="Expressed in adult Malpighian tubule bar-shaped cell of initial segment in Malpighian tubule and 252 other cell types or tissues"/>
</dbReference>
<dbReference type="ExpressionAtlas" id="Q9VJ79">
    <property type="expression patterns" value="baseline and differential"/>
</dbReference>
<dbReference type="GO" id="GO:0005829">
    <property type="term" value="C:cytosol"/>
    <property type="evidence" value="ECO:0007005"/>
    <property type="project" value="FlyBase"/>
</dbReference>
<dbReference type="GO" id="GO:0004115">
    <property type="term" value="F:3',5'-cyclic-AMP phosphodiesterase activity"/>
    <property type="evidence" value="ECO:0000314"/>
    <property type="project" value="UniProtKB"/>
</dbReference>
<dbReference type="GO" id="GO:0047555">
    <property type="term" value="F:3',5'-cyclic-GMP phosphodiesterase activity"/>
    <property type="evidence" value="ECO:0000314"/>
    <property type="project" value="UniProtKB"/>
</dbReference>
<dbReference type="GO" id="GO:0046872">
    <property type="term" value="F:metal ion binding"/>
    <property type="evidence" value="ECO:0007669"/>
    <property type="project" value="UniProtKB-KW"/>
</dbReference>
<dbReference type="GO" id="GO:0046058">
    <property type="term" value="P:cAMP metabolic process"/>
    <property type="evidence" value="ECO:0000314"/>
    <property type="project" value="UniProtKB"/>
</dbReference>
<dbReference type="GO" id="GO:0019933">
    <property type="term" value="P:cAMP-mediated signaling"/>
    <property type="evidence" value="ECO:0000318"/>
    <property type="project" value="GO_Central"/>
</dbReference>
<dbReference type="GO" id="GO:0046068">
    <property type="term" value="P:cGMP metabolic process"/>
    <property type="evidence" value="ECO:0000314"/>
    <property type="project" value="UniProtKB"/>
</dbReference>
<dbReference type="CDD" id="cd00077">
    <property type="entry name" value="HDc"/>
    <property type="match status" value="1"/>
</dbReference>
<dbReference type="FunFam" id="1.10.1300.10:FF:000003">
    <property type="entry name" value="Phosphodiesterase"/>
    <property type="match status" value="1"/>
</dbReference>
<dbReference type="FunFam" id="3.30.450.40:FF:000031">
    <property type="entry name" value="Phosphodiesterase"/>
    <property type="match status" value="1"/>
</dbReference>
<dbReference type="FunFam" id="3.30.450.40:FF:000032">
    <property type="entry name" value="Phosphodiesterase"/>
    <property type="match status" value="1"/>
</dbReference>
<dbReference type="Gene3D" id="3.30.450.40">
    <property type="match status" value="2"/>
</dbReference>
<dbReference type="Gene3D" id="1.10.1300.10">
    <property type="entry name" value="3'5'-cyclic nucleotide phosphodiesterase, catalytic domain"/>
    <property type="match status" value="1"/>
</dbReference>
<dbReference type="InterPro" id="IPR003018">
    <property type="entry name" value="GAF"/>
</dbReference>
<dbReference type="InterPro" id="IPR029016">
    <property type="entry name" value="GAF-like_dom_sf"/>
</dbReference>
<dbReference type="InterPro" id="IPR003607">
    <property type="entry name" value="HD/PDEase_dom"/>
</dbReference>
<dbReference type="InterPro" id="IPR023088">
    <property type="entry name" value="PDEase"/>
</dbReference>
<dbReference type="InterPro" id="IPR002073">
    <property type="entry name" value="PDEase_catalytic_dom"/>
</dbReference>
<dbReference type="InterPro" id="IPR036971">
    <property type="entry name" value="PDEase_catalytic_dom_sf"/>
</dbReference>
<dbReference type="InterPro" id="IPR023174">
    <property type="entry name" value="PDEase_CS"/>
</dbReference>
<dbReference type="PANTHER" id="PTHR11347">
    <property type="entry name" value="CYCLIC NUCLEOTIDE PHOSPHODIESTERASE"/>
    <property type="match status" value="1"/>
</dbReference>
<dbReference type="Pfam" id="PF01590">
    <property type="entry name" value="GAF"/>
    <property type="match status" value="2"/>
</dbReference>
<dbReference type="Pfam" id="PF00233">
    <property type="entry name" value="PDEase_I"/>
    <property type="match status" value="1"/>
</dbReference>
<dbReference type="PRINTS" id="PR00387">
    <property type="entry name" value="PDIESTERASE1"/>
</dbReference>
<dbReference type="SMART" id="SM00065">
    <property type="entry name" value="GAF"/>
    <property type="match status" value="2"/>
</dbReference>
<dbReference type="SMART" id="SM00471">
    <property type="entry name" value="HDc"/>
    <property type="match status" value="1"/>
</dbReference>
<dbReference type="SUPFAM" id="SSF55781">
    <property type="entry name" value="GAF domain-like"/>
    <property type="match status" value="2"/>
</dbReference>
<dbReference type="SUPFAM" id="SSF109604">
    <property type="entry name" value="HD-domain/PDEase-like"/>
    <property type="match status" value="1"/>
</dbReference>
<dbReference type="PROSITE" id="PS00126">
    <property type="entry name" value="PDEASE_I_1"/>
    <property type="match status" value="1"/>
</dbReference>
<dbReference type="PROSITE" id="PS51845">
    <property type="entry name" value="PDEASE_I_2"/>
    <property type="match status" value="1"/>
</dbReference>
<evidence type="ECO:0000250" key="1"/>
<evidence type="ECO:0000255" key="2">
    <source>
        <dbReference type="PROSITE-ProRule" id="PRU01192"/>
    </source>
</evidence>
<evidence type="ECO:0000256" key="3">
    <source>
        <dbReference type="SAM" id="MobiDB-lite"/>
    </source>
</evidence>
<evidence type="ECO:0000269" key="4">
    <source>
    </source>
</evidence>
<evidence type="ECO:0000303" key="5">
    <source>
    </source>
</evidence>
<evidence type="ECO:0000303" key="6">
    <source>
    </source>
</evidence>
<evidence type="ECO:0000305" key="7"/>
<keyword id="KW-0025">Alternative splicing</keyword>
<keyword id="KW-0114">cAMP</keyword>
<keyword id="KW-0140">cGMP</keyword>
<keyword id="KW-0378">Hydrolase</keyword>
<keyword id="KW-0479">Metal-binding</keyword>
<keyword id="KW-1185">Reference proteome</keyword>
<keyword id="KW-0677">Repeat</keyword>
<protein>
    <recommendedName>
        <fullName>Dual 3',5'-cyclic-AMP and -GMP phosphodiesterase 11</fullName>
        <ecNumber evidence="4">3.1.4.35</ecNumber>
        <ecNumber evidence="4">3.1.4.53</ecNumber>
    </recommendedName>
    <alternativeName>
        <fullName>cAMP and cGMP phosphodiesterase 11</fullName>
        <shortName evidence="6">PDE11</shortName>
    </alternativeName>
</protein>
<accession>Q9VJ79</accession>
<accession>Q8MQW0</accession>
<accession>Q9VJ78</accession>
<comment type="function">
    <text evidence="4">Plays a role in signal transduction by regulating the intracellular concentration of cyclic nucleotides cAMP and cGMP. Dual-specificity phosphodiesterase that catalyzes the hydrolysis of both cAMP and cGMP to 5'-AMP and 5'-GMP, respectively.</text>
</comment>
<comment type="catalytic activity">
    <reaction evidence="4">
        <text>3',5'-cyclic GMP + H2O = GMP + H(+)</text>
        <dbReference type="Rhea" id="RHEA:16957"/>
        <dbReference type="ChEBI" id="CHEBI:15377"/>
        <dbReference type="ChEBI" id="CHEBI:15378"/>
        <dbReference type="ChEBI" id="CHEBI:57746"/>
        <dbReference type="ChEBI" id="CHEBI:58115"/>
        <dbReference type="EC" id="3.1.4.35"/>
    </reaction>
    <physiologicalReaction direction="left-to-right" evidence="4">
        <dbReference type="Rhea" id="RHEA:16958"/>
    </physiologicalReaction>
</comment>
<comment type="catalytic activity">
    <reaction evidence="4">
        <text>3',5'-cyclic AMP + H2O = AMP + H(+)</text>
        <dbReference type="Rhea" id="RHEA:25277"/>
        <dbReference type="ChEBI" id="CHEBI:15377"/>
        <dbReference type="ChEBI" id="CHEBI:15378"/>
        <dbReference type="ChEBI" id="CHEBI:58165"/>
        <dbReference type="ChEBI" id="CHEBI:456215"/>
        <dbReference type="EC" id="3.1.4.53"/>
    </reaction>
    <physiologicalReaction direction="left-to-right" evidence="4">
        <dbReference type="Rhea" id="RHEA:25278"/>
    </physiologicalReaction>
</comment>
<comment type="cofactor">
    <cofactor evidence="1">
        <name>a divalent metal cation</name>
        <dbReference type="ChEBI" id="CHEBI:60240"/>
    </cofactor>
    <text evidence="1">Binds 2 divalent metal cations per subunit. Site 1 may preferentially bind zinc ions, while site 2 has a preference for magnesium and/or manganese ions.</text>
</comment>
<comment type="biophysicochemical properties">
    <kinetics>
        <KM evidence="4">18.5 uM for cAMP</KM>
        <KM evidence="4">6 uM for cGMP</KM>
    </kinetics>
</comment>
<comment type="alternative products">
    <event type="alternative splicing"/>
    <isoform>
        <id>Q9VJ79-1</id>
        <name>B</name>
        <sequence type="displayed"/>
    </isoform>
    <isoform>
        <id>Q9VJ79-3</id>
        <name>C</name>
        <sequence type="described" ref="VSP_030328 VSP_030329"/>
    </isoform>
    <isoform>
        <id>Q9VJ79-2</id>
        <name>D</name>
        <sequence type="described" ref="VSP_019906"/>
    </isoform>
</comment>
<comment type="tissue specificity">
    <text evidence="4">In adults, it is enriched in Malpighian tubules.</text>
</comment>
<comment type="similarity">
    <text evidence="7">Belongs to the cyclic nucleotide phosphodiesterase family.</text>
</comment>
<sequence>MGQAASMCRFRGCRYKNKNKSSKQQQQQQQQQQQQQQQHQQQQQQTPSHSPQIQHHSEIIPATTGLHLRSIEEPATTPLQFQPTGRMNTEQGGTGYGGYGSSEHSLLIATRHAGVPLPLAQHQPLPAHYQPLNHSGAAPPSSSNGSSSSGGGVQTSATPQQQQQYQVQQPYQYQYQHHYHHQANSPQHHRPYDPEHARMEAWLDENQEFVQDYFIRKATRQTVDAWLVSHATSAGNDVVSSTSPTHANGQTSSSRGGSGATTPVRKISAHEFERGGLLKPIVNTIDGTPTFLSIGPPMDNGSVGGSCSNLQNVGGVVAGQYQYNHQQHHHNHAHLHHSQHSHYQAGGAVGSSSLGSTGGASGAGGAPSLGGSGGAGNGHQYPYYHCHQRPQRLSRNELKQLDEKELIFELVKDICNELEVRTLCHKILQNVSILLNADRGSLFLVQGRCNGPDGLKKCLVSKLFDVCPRSTVEEMEQQDEVRVAWGTGIAGHVAESGEPVNIPDAYQDERFNCEIDSLTGYRTKALLCMPIKDSSGDVIGVAQVINKMNGECFSEIDEKVFSSYLQFCGIGLRNAQLYEKSQLEIKRNQVLLDLARMIFEEQSTIEHMVFRILTHMQSLIQCQRVQILLVHEADKGSFSRVFDFEANDLSEEEATSRTSPYESRFPINIGITGHVATTGETVNVPNAYEDDRFDASVDENSCFKHRSILCMAIKNSLGQIIGVIQLINKFNELDFTKNDENFVEAFAIFCGMGIHNTHMYEKAIVAMAKQSVTLEVLSYHASATMDEAHRLRRLRVPSAVHFRLHDFKFDDIHFEDDDTLKACLRMFLDLDFVERFHIDYEVLCRWLLSVKKNYRNVTYHNWRHAFNVAQMMFAILTTTQWWKIFGEIECLALIIGCLCHDLDHRGTNNSFQIKASSPLAQLYSTSTMEHHHFDQCLMILNSPGNQILANLSSDDYCRVIRVLEDAILSTDLAVYFKKRGPFLESVSQPTSYWVAEEPRALLRAMSMTVCDLSAITKPWEIEKRVADLVSSEFFEQGDMEKQELNITPIDIMNREKEDELPMMQVNFIDSICLPIYEAFATLSDKLEPLVEGVRDNRGHWIDLADVVKTKTSQDQEPEEEQQQQNVISNGDCKAMSDDDVAASEAEVAVDSPSEKASVNGSNVANNSSNTNKKIAVASHPTSTQPSDDDNDVDADADDVDEQAAEENGHDAEVDEASCRSNSTCSSSTASSCLSTPPPTGEDDSTPVSPLKTLQAKLVAANLNALQRQTSNQAQTQKQRCKSCDHSRSGLQVRKTSSLRGAQELDLDSKTRNGTHAALCKSTPVINNHSHHHNHSHSHNHNHHHHHHHHSHHNHSQHGIGIGSASIGGSGLISLTTPLLAMDSDRIPKIVGKIGNLDGLPFANGIGGPQNGHGLPFGSYQHHHHHQHHHHLLARRHSETNSNGATAMAVEK</sequence>